<proteinExistence type="inferred from homology"/>
<gene>
    <name evidence="1" type="primary">APOBEC1</name>
</gene>
<dbReference type="EC" id="3.5.4.-" evidence="1"/>
<dbReference type="EC" id="3.5.4.36" evidence="1"/>
<dbReference type="EMBL" id="AY622604">
    <property type="protein sequence ID" value="AAT44389.1"/>
    <property type="status" value="ALT_INIT"/>
    <property type="molecule type" value="Genomic_DNA"/>
</dbReference>
<dbReference type="EMBL" id="AY622600">
    <property type="protein sequence ID" value="AAT44389.1"/>
    <property type="status" value="JOINED"/>
    <property type="molecule type" value="Genomic_DNA"/>
</dbReference>
<dbReference type="EMBL" id="AY622601">
    <property type="protein sequence ID" value="AAT44389.1"/>
    <property type="status" value="JOINED"/>
    <property type="molecule type" value="Genomic_DNA"/>
</dbReference>
<dbReference type="EMBL" id="AY622603">
    <property type="protein sequence ID" value="AAT44389.1"/>
    <property type="status" value="JOINED"/>
    <property type="molecule type" value="Genomic_DNA"/>
</dbReference>
<dbReference type="EMBL" id="AY622602">
    <property type="protein sequence ID" value="AAT44389.1"/>
    <property type="status" value="JOINED"/>
    <property type="molecule type" value="Genomic_DNA"/>
</dbReference>
<dbReference type="SMR" id="Q694B3"/>
<dbReference type="GO" id="GO:0005737">
    <property type="term" value="C:cytoplasm"/>
    <property type="evidence" value="ECO:0000250"/>
    <property type="project" value="UniProtKB"/>
</dbReference>
<dbReference type="GO" id="GO:0005634">
    <property type="term" value="C:nucleus"/>
    <property type="evidence" value="ECO:0007669"/>
    <property type="project" value="UniProtKB-SubCell"/>
</dbReference>
<dbReference type="GO" id="GO:0004126">
    <property type="term" value="F:cytidine deaminase activity"/>
    <property type="evidence" value="ECO:0007669"/>
    <property type="project" value="TreeGrafter"/>
</dbReference>
<dbReference type="GO" id="GO:0003723">
    <property type="term" value="F:RNA binding"/>
    <property type="evidence" value="ECO:0007669"/>
    <property type="project" value="TreeGrafter"/>
</dbReference>
<dbReference type="GO" id="GO:0008270">
    <property type="term" value="F:zinc ion binding"/>
    <property type="evidence" value="ECO:0007669"/>
    <property type="project" value="InterPro"/>
</dbReference>
<dbReference type="GO" id="GO:0016554">
    <property type="term" value="P:cytidine to uridine editing"/>
    <property type="evidence" value="ECO:0007669"/>
    <property type="project" value="TreeGrafter"/>
</dbReference>
<dbReference type="GO" id="GO:0006397">
    <property type="term" value="P:mRNA processing"/>
    <property type="evidence" value="ECO:0007669"/>
    <property type="project" value="UniProtKB-KW"/>
</dbReference>
<dbReference type="GO" id="GO:0044029">
    <property type="term" value="P:positive regulation of gene expression via chromosomal CpG island demethylation"/>
    <property type="evidence" value="ECO:0000250"/>
    <property type="project" value="UniProtKB"/>
</dbReference>
<dbReference type="CDD" id="cd01283">
    <property type="entry name" value="cytidine_deaminase"/>
    <property type="match status" value="1"/>
</dbReference>
<dbReference type="FunFam" id="3.40.140.10:FF:000049">
    <property type="entry name" value="C-&gt;U-editing enzyme APOBEC-1 isoform X2"/>
    <property type="match status" value="1"/>
</dbReference>
<dbReference type="Gene3D" id="3.40.140.10">
    <property type="entry name" value="Cytidine Deaminase, domain 2"/>
    <property type="match status" value="1"/>
</dbReference>
<dbReference type="InterPro" id="IPR016192">
    <property type="entry name" value="APOBEC/CMP_deaminase_Zn-bd"/>
</dbReference>
<dbReference type="InterPro" id="IPR041547">
    <property type="entry name" value="APOBEC1"/>
</dbReference>
<dbReference type="InterPro" id="IPR050610">
    <property type="entry name" value="APOBEC_Cyt_Deaminase"/>
</dbReference>
<dbReference type="InterPro" id="IPR002125">
    <property type="entry name" value="CMP_dCMP_dom"/>
</dbReference>
<dbReference type="InterPro" id="IPR016193">
    <property type="entry name" value="Cytidine_deaminase-like"/>
</dbReference>
<dbReference type="PANTHER" id="PTHR13857:SF26">
    <property type="entry name" value="C-U-EDITING ENZYME APOBEC-1"/>
    <property type="match status" value="1"/>
</dbReference>
<dbReference type="PANTHER" id="PTHR13857">
    <property type="entry name" value="MRNA EDITING ENZYME"/>
    <property type="match status" value="1"/>
</dbReference>
<dbReference type="Pfam" id="PF18774">
    <property type="entry name" value="APOBEC4_like"/>
    <property type="match status" value="1"/>
</dbReference>
<dbReference type="SUPFAM" id="SSF53927">
    <property type="entry name" value="Cytidine deaminase-like"/>
    <property type="match status" value="1"/>
</dbReference>
<dbReference type="PROSITE" id="PS00903">
    <property type="entry name" value="CYT_DCMP_DEAMINASES_1"/>
    <property type="match status" value="1"/>
</dbReference>
<dbReference type="PROSITE" id="PS51747">
    <property type="entry name" value="CYT_DCMP_DEAMINASES_2"/>
    <property type="match status" value="1"/>
</dbReference>
<reference key="1">
    <citation type="journal article" date="2004" name="PLoS Biol.">
        <title>Ancient adaptive evolution of the primate antiviral DNA-editing enzyme APOBEC3G.</title>
        <authorList>
            <person name="Sawyer S.L."/>
            <person name="Emerman M."/>
            <person name="Malik H.S."/>
        </authorList>
    </citation>
    <scope>NUCLEOTIDE SEQUENCE [GENOMIC DNA]</scope>
</reference>
<name>ABEC1_PONPY</name>
<keyword id="KW-0963">Cytoplasm</keyword>
<keyword id="KW-0378">Hydrolase</keyword>
<keyword id="KW-0479">Metal-binding</keyword>
<keyword id="KW-0507">mRNA processing</keyword>
<keyword id="KW-0539">Nucleus</keyword>
<keyword id="KW-0862">Zinc</keyword>
<feature type="chain" id="PRO_0000171746" description="C-&gt;U-editing enzyme APOBEC-1">
    <location>
        <begin position="1"/>
        <end position="236"/>
    </location>
</feature>
<feature type="domain" description="CMP/dCMP-type deaminase" evidence="4">
    <location>
        <begin position="10"/>
        <end position="134"/>
    </location>
</feature>
<feature type="active site" description="Proton donor" evidence="3">
    <location>
        <position position="63"/>
    </location>
</feature>
<feature type="binding site" evidence="3">
    <location>
        <position position="61"/>
    </location>
    <ligand>
        <name>Zn(2+)</name>
        <dbReference type="ChEBI" id="CHEBI:29105"/>
        <note>catalytic</note>
    </ligand>
</feature>
<feature type="binding site" evidence="3">
    <location>
        <position position="93"/>
    </location>
    <ligand>
        <name>Zn(2+)</name>
        <dbReference type="ChEBI" id="CHEBI:29105"/>
        <note>catalytic</note>
    </ligand>
</feature>
<feature type="binding site" evidence="3">
    <location>
        <position position="96"/>
    </location>
    <ligand>
        <name>Zn(2+)</name>
        <dbReference type="ChEBI" id="CHEBI:29105"/>
        <note>catalytic</note>
    </ligand>
</feature>
<organism>
    <name type="scientific">Pongo pygmaeus</name>
    <name type="common">Bornean orangutan</name>
    <dbReference type="NCBI Taxonomy" id="9600"/>
    <lineage>
        <taxon>Eukaryota</taxon>
        <taxon>Metazoa</taxon>
        <taxon>Chordata</taxon>
        <taxon>Craniata</taxon>
        <taxon>Vertebrata</taxon>
        <taxon>Euteleostomi</taxon>
        <taxon>Mammalia</taxon>
        <taxon>Eutheria</taxon>
        <taxon>Euarchontoglires</taxon>
        <taxon>Primates</taxon>
        <taxon>Haplorrhini</taxon>
        <taxon>Catarrhini</taxon>
        <taxon>Hominidae</taxon>
        <taxon>Pongo</taxon>
    </lineage>
</organism>
<evidence type="ECO:0000250" key="1">
    <source>
        <dbReference type="UniProtKB" id="P41238"/>
    </source>
</evidence>
<evidence type="ECO:0000250" key="2">
    <source>
        <dbReference type="UniProtKB" id="P51908"/>
    </source>
</evidence>
<evidence type="ECO:0000250" key="3">
    <source>
        <dbReference type="UniProtKB" id="Q9Y235"/>
    </source>
</evidence>
<evidence type="ECO:0000255" key="4">
    <source>
        <dbReference type="PROSITE-ProRule" id="PRU01083"/>
    </source>
</evidence>
<evidence type="ECO:0000305" key="5"/>
<evidence type="ECO:0000305" key="6">
    <source>
    </source>
</evidence>
<accession>Q694B3</accession>
<protein>
    <recommendedName>
        <fullName evidence="6">C-&gt;U-editing enzyme APOBEC-1</fullName>
        <ecNumber evidence="1">3.5.4.-</ecNumber>
    </recommendedName>
    <alternativeName>
        <fullName evidence="1">Apolipoprotein B mRNA-editing enzyme catalytic polypeptide 1</fullName>
        <shortName evidence="1">APOBEC-1</shortName>
        <shortName evidence="1">Apolipoprotein B mRNA-editing enzyme 1</shortName>
        <ecNumber evidence="1">3.5.4.36</ecNumber>
    </alternativeName>
    <alternativeName>
        <fullName evidence="1">mRNA(cytosine(6666)) deaminase 1</fullName>
    </alternativeName>
</protein>
<sequence length="236" mass="28225">MTSEKGPSTGDPTLRRRIESWEFDVFYDPRELRKETCLLYEIKWGMSRKIWRSSGKNTTNHVEVNFIKKFTSERRFHSSISCSITWFLSWSPCWECSQAIREFLSQHPGVTLVIYVARLFWHMDQRNRQGLRDLVNSGVTIQIMRASEYYHCWRNFVNYPPGDEAHWPQYPPLWMMLYALELHCIILSLPPCLKISRRWQNHLAFFRLHLQNCHYQTIPPHILLATGLIHPSVTWR</sequence>
<comment type="function">
    <text evidence="1 2">Cytidine deaminase catalyzing the cytidine to uridine postranscriptional editing of a variety of mRNAs. Form complexes with cofactors that confer differential editing activity and selectivity. Responsible for the postranscriptional editing of a CAA codon for Gln to a UAA codon for stop in the apolipoprotein B mRNA. Also involved in CGA (Arg) to UGA (Stop) editing in the NF1 mRNA (By similarity). May also play a role in the epigenetic regulation of gene expression by participating in DNA demethylation (By similarity).</text>
</comment>
<comment type="catalytic activity">
    <reaction evidence="1">
        <text>a cytidine in mRNA + H2O + H(+) = a uridine in mRNA + NH4(+)</text>
        <dbReference type="Rhea" id="RHEA:74355"/>
        <dbReference type="Rhea" id="RHEA-COMP:14658"/>
        <dbReference type="Rhea" id="RHEA-COMP:15145"/>
        <dbReference type="ChEBI" id="CHEBI:15377"/>
        <dbReference type="ChEBI" id="CHEBI:15378"/>
        <dbReference type="ChEBI" id="CHEBI:28938"/>
        <dbReference type="ChEBI" id="CHEBI:65315"/>
        <dbReference type="ChEBI" id="CHEBI:82748"/>
    </reaction>
    <physiologicalReaction direction="left-to-right" evidence="1">
        <dbReference type="Rhea" id="RHEA:74356"/>
    </physiologicalReaction>
</comment>
<comment type="catalytic activity">
    <reaction evidence="1">
        <text>cytidine(6666) in apoB mRNA + H2O + H(+) = uridine(6666) in apoB mRNA + NH4(+)</text>
        <dbReference type="Rhea" id="RHEA:21772"/>
        <dbReference type="Rhea" id="RHEA-COMP:13888"/>
        <dbReference type="Rhea" id="RHEA-COMP:13889"/>
        <dbReference type="ChEBI" id="CHEBI:15377"/>
        <dbReference type="ChEBI" id="CHEBI:15378"/>
        <dbReference type="ChEBI" id="CHEBI:28938"/>
        <dbReference type="ChEBI" id="CHEBI:65315"/>
        <dbReference type="ChEBI" id="CHEBI:82748"/>
        <dbReference type="EC" id="3.5.4.36"/>
    </reaction>
    <physiologicalReaction direction="left-to-right" evidence="1">
        <dbReference type="Rhea" id="RHEA:21773"/>
    </physiologicalReaction>
</comment>
<comment type="cofactor">
    <cofactor evidence="3">
        <name>Zn(2+)</name>
        <dbReference type="ChEBI" id="CHEBI:29105"/>
    </cofactor>
    <text evidence="3">Binds 1 Zn(2+) ion per subunit.</text>
</comment>
<comment type="subunit">
    <text evidence="1">Homodimer. Interacts with A1CF; form an mRNA editing complex. Interacts with RBM47; form an mRNA editing complex. Found in a complex with CELF2/CUGBP2 and A1CF. Interacts with HNRPAB. Interacts with SYNCRIP.</text>
</comment>
<comment type="subcellular location">
    <subcellularLocation>
        <location evidence="1">Cytoplasm</location>
    </subcellularLocation>
    <subcellularLocation>
        <location evidence="1">Nucleus</location>
    </subcellularLocation>
</comment>
<comment type="similarity">
    <text evidence="5">Belongs to the cytidine and deoxycytidylate deaminase family.</text>
</comment>
<comment type="sequence caution" evidence="5">
    <conflict type="erroneous initiation">
        <sequence resource="EMBL-CDS" id="AAT44389"/>
    </conflict>
    <text>Extended N-terminus.</text>
</comment>